<reference key="1">
    <citation type="journal article" date="2011" name="J. Bacteriol.">
        <title>Comparative genomics of 28 Salmonella enterica isolates: evidence for CRISPR-mediated adaptive sublineage evolution.</title>
        <authorList>
            <person name="Fricke W.F."/>
            <person name="Mammel M.K."/>
            <person name="McDermott P.F."/>
            <person name="Tartera C."/>
            <person name="White D.G."/>
            <person name="Leclerc J.E."/>
            <person name="Ravel J."/>
            <person name="Cebula T.A."/>
        </authorList>
    </citation>
    <scope>NUCLEOTIDE SEQUENCE [LARGE SCALE GENOMIC DNA]</scope>
    <source>
        <strain>CVM19633</strain>
    </source>
</reference>
<feature type="chain" id="PRO_1000195346" description="Protein-export protein SecB">
    <location>
        <begin position="1"/>
        <end position="155"/>
    </location>
</feature>
<accession>B4TZV2</accession>
<sequence length="155" mass="17245">MSEQNNTEMAFQIQRIYTKDVSFEAPNAPHVFQKDWQPEVKLDLDTASSQLADDVYEVVLRVTVTASLGEETAFLCEVQQAGIFSISGIEGTQMAHCLGAYCPNILFPYARECITSLVSRGTFPQLNLAPVNFDALFMNYLQQQAGEGTEEHQDA</sequence>
<organism>
    <name type="scientific">Salmonella schwarzengrund (strain CVM19633)</name>
    <dbReference type="NCBI Taxonomy" id="439843"/>
    <lineage>
        <taxon>Bacteria</taxon>
        <taxon>Pseudomonadati</taxon>
        <taxon>Pseudomonadota</taxon>
        <taxon>Gammaproteobacteria</taxon>
        <taxon>Enterobacterales</taxon>
        <taxon>Enterobacteriaceae</taxon>
        <taxon>Salmonella</taxon>
    </lineage>
</organism>
<proteinExistence type="inferred from homology"/>
<protein>
    <recommendedName>
        <fullName evidence="1">Protein-export protein SecB</fullName>
    </recommendedName>
</protein>
<comment type="function">
    <text evidence="1">One of the proteins required for the normal export of preproteins out of the cell cytoplasm. It is a molecular chaperone that binds to a subset of precursor proteins, maintaining them in a translocation-competent state. It also specifically binds to its receptor SecA.</text>
</comment>
<comment type="subunit">
    <text evidence="1">Homotetramer, a dimer of dimers. One homotetramer interacts with 1 SecA dimer.</text>
</comment>
<comment type="subcellular location">
    <subcellularLocation>
        <location evidence="1">Cytoplasm</location>
    </subcellularLocation>
</comment>
<comment type="similarity">
    <text evidence="1">Belongs to the SecB family.</text>
</comment>
<gene>
    <name evidence="1" type="primary">secB</name>
    <name type="ordered locus">SeSA_A3900</name>
</gene>
<keyword id="KW-0143">Chaperone</keyword>
<keyword id="KW-0963">Cytoplasm</keyword>
<keyword id="KW-0653">Protein transport</keyword>
<keyword id="KW-0811">Translocation</keyword>
<keyword id="KW-0813">Transport</keyword>
<evidence type="ECO:0000255" key="1">
    <source>
        <dbReference type="HAMAP-Rule" id="MF_00821"/>
    </source>
</evidence>
<name>SECB_SALSV</name>
<dbReference type="EMBL" id="CP001127">
    <property type="protein sequence ID" value="ACF90549.1"/>
    <property type="molecule type" value="Genomic_DNA"/>
</dbReference>
<dbReference type="RefSeq" id="WP_000003370.1">
    <property type="nucleotide sequence ID" value="NC_011094.1"/>
</dbReference>
<dbReference type="SMR" id="B4TZV2"/>
<dbReference type="KEGG" id="sew:SeSA_A3900"/>
<dbReference type="HOGENOM" id="CLU_111574_1_0_6"/>
<dbReference type="Proteomes" id="UP000001865">
    <property type="component" value="Chromosome"/>
</dbReference>
<dbReference type="GO" id="GO:0005737">
    <property type="term" value="C:cytoplasm"/>
    <property type="evidence" value="ECO:0007669"/>
    <property type="project" value="UniProtKB-SubCell"/>
</dbReference>
<dbReference type="GO" id="GO:0051082">
    <property type="term" value="F:unfolded protein binding"/>
    <property type="evidence" value="ECO:0007669"/>
    <property type="project" value="InterPro"/>
</dbReference>
<dbReference type="GO" id="GO:0006457">
    <property type="term" value="P:protein folding"/>
    <property type="evidence" value="ECO:0007669"/>
    <property type="project" value="UniProtKB-UniRule"/>
</dbReference>
<dbReference type="GO" id="GO:0051262">
    <property type="term" value="P:protein tetramerization"/>
    <property type="evidence" value="ECO:0007669"/>
    <property type="project" value="InterPro"/>
</dbReference>
<dbReference type="GO" id="GO:0015031">
    <property type="term" value="P:protein transport"/>
    <property type="evidence" value="ECO:0007669"/>
    <property type="project" value="UniProtKB-UniRule"/>
</dbReference>
<dbReference type="CDD" id="cd00557">
    <property type="entry name" value="Translocase_SecB"/>
    <property type="match status" value="1"/>
</dbReference>
<dbReference type="FunFam" id="3.10.420.10:FF:000001">
    <property type="entry name" value="Protein-export chaperone SecB"/>
    <property type="match status" value="1"/>
</dbReference>
<dbReference type="Gene3D" id="3.10.420.10">
    <property type="entry name" value="SecB-like"/>
    <property type="match status" value="1"/>
</dbReference>
<dbReference type="HAMAP" id="MF_00821">
    <property type="entry name" value="SecB"/>
    <property type="match status" value="1"/>
</dbReference>
<dbReference type="InterPro" id="IPR003708">
    <property type="entry name" value="SecB"/>
</dbReference>
<dbReference type="InterPro" id="IPR035958">
    <property type="entry name" value="SecB-like_sf"/>
</dbReference>
<dbReference type="NCBIfam" id="NF004390">
    <property type="entry name" value="PRK05751.1-1"/>
    <property type="match status" value="1"/>
</dbReference>
<dbReference type="NCBIfam" id="NF004393">
    <property type="entry name" value="PRK05751.1-4"/>
    <property type="match status" value="1"/>
</dbReference>
<dbReference type="NCBIfam" id="TIGR00809">
    <property type="entry name" value="secB"/>
    <property type="match status" value="1"/>
</dbReference>
<dbReference type="PANTHER" id="PTHR36918">
    <property type="match status" value="1"/>
</dbReference>
<dbReference type="PANTHER" id="PTHR36918:SF1">
    <property type="entry name" value="PROTEIN-EXPORT PROTEIN SECB"/>
    <property type="match status" value="1"/>
</dbReference>
<dbReference type="Pfam" id="PF02556">
    <property type="entry name" value="SecB"/>
    <property type="match status" value="1"/>
</dbReference>
<dbReference type="PRINTS" id="PR01594">
    <property type="entry name" value="SECBCHAPRONE"/>
</dbReference>
<dbReference type="SUPFAM" id="SSF54611">
    <property type="entry name" value="SecB-like"/>
    <property type="match status" value="1"/>
</dbReference>